<accession>Q1GRD4</accession>
<keyword id="KW-0067">ATP-binding</keyword>
<keyword id="KW-0143">Chaperone</keyword>
<keyword id="KW-0963">Cytoplasm</keyword>
<keyword id="KW-0413">Isomerase</keyword>
<keyword id="KW-0547">Nucleotide-binding</keyword>
<keyword id="KW-1185">Reference proteome</keyword>
<evidence type="ECO:0000255" key="1">
    <source>
        <dbReference type="HAMAP-Rule" id="MF_00600"/>
    </source>
</evidence>
<comment type="function">
    <text evidence="1">Together with its co-chaperonin GroES, plays an essential role in assisting protein folding. The GroEL-GroES system forms a nano-cage that allows encapsulation of the non-native substrate proteins and provides a physical environment optimized to promote and accelerate protein folding.</text>
</comment>
<comment type="catalytic activity">
    <reaction evidence="1">
        <text>ATP + H2O + a folded polypeptide = ADP + phosphate + an unfolded polypeptide.</text>
        <dbReference type="EC" id="5.6.1.7"/>
    </reaction>
</comment>
<comment type="subunit">
    <text evidence="1">Forms a cylinder of 14 subunits composed of two heptameric rings stacked back-to-back. Interacts with the co-chaperonin GroES.</text>
</comment>
<comment type="subcellular location">
    <subcellularLocation>
        <location evidence="1">Cytoplasm</location>
    </subcellularLocation>
</comment>
<comment type="similarity">
    <text evidence="1">Belongs to the chaperonin (HSP60) family.</text>
</comment>
<protein>
    <recommendedName>
        <fullName evidence="1">Chaperonin GroEL 2</fullName>
        <ecNumber evidence="1">5.6.1.7</ecNumber>
    </recommendedName>
    <alternativeName>
        <fullName evidence="1">60 kDa chaperonin 2</fullName>
    </alternativeName>
    <alternativeName>
        <fullName evidence="1">Chaperonin-60 2</fullName>
        <shortName evidence="1">Cpn60 2</shortName>
    </alternativeName>
</protein>
<proteinExistence type="inferred from homology"/>
<feature type="chain" id="PRO_0000256990" description="Chaperonin GroEL 2">
    <location>
        <begin position="1"/>
        <end position="539"/>
    </location>
</feature>
<feature type="binding site" evidence="1">
    <location>
        <begin position="30"/>
        <end position="33"/>
    </location>
    <ligand>
        <name>ATP</name>
        <dbReference type="ChEBI" id="CHEBI:30616"/>
    </ligand>
</feature>
<feature type="binding site" evidence="1">
    <location>
        <position position="51"/>
    </location>
    <ligand>
        <name>ATP</name>
        <dbReference type="ChEBI" id="CHEBI:30616"/>
    </ligand>
</feature>
<feature type="binding site" evidence="1">
    <location>
        <begin position="87"/>
        <end position="91"/>
    </location>
    <ligand>
        <name>ATP</name>
        <dbReference type="ChEBI" id="CHEBI:30616"/>
    </ligand>
</feature>
<feature type="binding site" evidence="1">
    <location>
        <position position="415"/>
    </location>
    <ligand>
        <name>ATP</name>
        <dbReference type="ChEBI" id="CHEBI:30616"/>
    </ligand>
</feature>
<feature type="binding site" evidence="1">
    <location>
        <begin position="480"/>
        <end position="482"/>
    </location>
    <ligand>
        <name>ATP</name>
        <dbReference type="ChEBI" id="CHEBI:30616"/>
    </ligand>
</feature>
<feature type="binding site" evidence="1">
    <location>
        <position position="496"/>
    </location>
    <ligand>
        <name>ATP</name>
        <dbReference type="ChEBI" id="CHEBI:30616"/>
    </ligand>
</feature>
<organism>
    <name type="scientific">Sphingopyxis alaskensis (strain DSM 13593 / LMG 18877 / RB2256)</name>
    <name type="common">Sphingomonas alaskensis</name>
    <dbReference type="NCBI Taxonomy" id="317655"/>
    <lineage>
        <taxon>Bacteria</taxon>
        <taxon>Pseudomonadati</taxon>
        <taxon>Pseudomonadota</taxon>
        <taxon>Alphaproteobacteria</taxon>
        <taxon>Sphingomonadales</taxon>
        <taxon>Sphingomonadaceae</taxon>
        <taxon>Sphingopyxis</taxon>
    </lineage>
</organism>
<name>CH602_SPHAL</name>
<dbReference type="EC" id="5.6.1.7" evidence="1"/>
<dbReference type="EMBL" id="CP000356">
    <property type="protein sequence ID" value="ABF53788.1"/>
    <property type="molecule type" value="Genomic_DNA"/>
</dbReference>
<dbReference type="RefSeq" id="WP_011542364.1">
    <property type="nucleotide sequence ID" value="NC_008048.1"/>
</dbReference>
<dbReference type="SMR" id="Q1GRD4"/>
<dbReference type="STRING" id="317655.Sala_2079"/>
<dbReference type="KEGG" id="sal:Sala_2079"/>
<dbReference type="eggNOG" id="COG0459">
    <property type="taxonomic scope" value="Bacteria"/>
</dbReference>
<dbReference type="HOGENOM" id="CLU_016503_3_0_5"/>
<dbReference type="OrthoDB" id="9766614at2"/>
<dbReference type="Proteomes" id="UP000006578">
    <property type="component" value="Chromosome"/>
</dbReference>
<dbReference type="GO" id="GO:0005737">
    <property type="term" value="C:cytoplasm"/>
    <property type="evidence" value="ECO:0007669"/>
    <property type="project" value="UniProtKB-SubCell"/>
</dbReference>
<dbReference type="GO" id="GO:0005524">
    <property type="term" value="F:ATP binding"/>
    <property type="evidence" value="ECO:0007669"/>
    <property type="project" value="UniProtKB-UniRule"/>
</dbReference>
<dbReference type="GO" id="GO:0140662">
    <property type="term" value="F:ATP-dependent protein folding chaperone"/>
    <property type="evidence" value="ECO:0007669"/>
    <property type="project" value="InterPro"/>
</dbReference>
<dbReference type="GO" id="GO:0016853">
    <property type="term" value="F:isomerase activity"/>
    <property type="evidence" value="ECO:0007669"/>
    <property type="project" value="UniProtKB-KW"/>
</dbReference>
<dbReference type="GO" id="GO:0051082">
    <property type="term" value="F:unfolded protein binding"/>
    <property type="evidence" value="ECO:0007669"/>
    <property type="project" value="UniProtKB-UniRule"/>
</dbReference>
<dbReference type="GO" id="GO:0042026">
    <property type="term" value="P:protein refolding"/>
    <property type="evidence" value="ECO:0007669"/>
    <property type="project" value="UniProtKB-UniRule"/>
</dbReference>
<dbReference type="CDD" id="cd03344">
    <property type="entry name" value="GroEL"/>
    <property type="match status" value="1"/>
</dbReference>
<dbReference type="FunFam" id="1.10.560.10:FF:000001">
    <property type="entry name" value="60 kDa chaperonin"/>
    <property type="match status" value="1"/>
</dbReference>
<dbReference type="FunFam" id="3.50.7.10:FF:000001">
    <property type="entry name" value="60 kDa chaperonin"/>
    <property type="match status" value="1"/>
</dbReference>
<dbReference type="Gene3D" id="3.50.7.10">
    <property type="entry name" value="GroEL"/>
    <property type="match status" value="1"/>
</dbReference>
<dbReference type="Gene3D" id="1.10.560.10">
    <property type="entry name" value="GroEL-like equatorial domain"/>
    <property type="match status" value="1"/>
</dbReference>
<dbReference type="Gene3D" id="3.30.260.10">
    <property type="entry name" value="TCP-1-like chaperonin intermediate domain"/>
    <property type="match status" value="1"/>
</dbReference>
<dbReference type="HAMAP" id="MF_00600">
    <property type="entry name" value="CH60"/>
    <property type="match status" value="1"/>
</dbReference>
<dbReference type="InterPro" id="IPR018370">
    <property type="entry name" value="Chaperonin_Cpn60_CS"/>
</dbReference>
<dbReference type="InterPro" id="IPR001844">
    <property type="entry name" value="Cpn60/GroEL"/>
</dbReference>
<dbReference type="InterPro" id="IPR002423">
    <property type="entry name" value="Cpn60/GroEL/TCP-1"/>
</dbReference>
<dbReference type="InterPro" id="IPR027409">
    <property type="entry name" value="GroEL-like_apical_dom_sf"/>
</dbReference>
<dbReference type="InterPro" id="IPR027413">
    <property type="entry name" value="GROEL-like_equatorial_sf"/>
</dbReference>
<dbReference type="InterPro" id="IPR027410">
    <property type="entry name" value="TCP-1-like_intermed_sf"/>
</dbReference>
<dbReference type="NCBIfam" id="TIGR02348">
    <property type="entry name" value="GroEL"/>
    <property type="match status" value="1"/>
</dbReference>
<dbReference type="NCBIfam" id="NF000592">
    <property type="entry name" value="PRK00013.1"/>
    <property type="match status" value="1"/>
</dbReference>
<dbReference type="NCBIfam" id="NF009487">
    <property type="entry name" value="PRK12849.1"/>
    <property type="match status" value="1"/>
</dbReference>
<dbReference type="NCBIfam" id="NF009488">
    <property type="entry name" value="PRK12850.1"/>
    <property type="match status" value="1"/>
</dbReference>
<dbReference type="NCBIfam" id="NF009489">
    <property type="entry name" value="PRK12851.1"/>
    <property type="match status" value="1"/>
</dbReference>
<dbReference type="PANTHER" id="PTHR45633">
    <property type="entry name" value="60 KDA HEAT SHOCK PROTEIN, MITOCHONDRIAL"/>
    <property type="match status" value="1"/>
</dbReference>
<dbReference type="Pfam" id="PF00118">
    <property type="entry name" value="Cpn60_TCP1"/>
    <property type="match status" value="1"/>
</dbReference>
<dbReference type="PRINTS" id="PR00298">
    <property type="entry name" value="CHAPERONIN60"/>
</dbReference>
<dbReference type="SUPFAM" id="SSF52029">
    <property type="entry name" value="GroEL apical domain-like"/>
    <property type="match status" value="1"/>
</dbReference>
<dbReference type="SUPFAM" id="SSF48592">
    <property type="entry name" value="GroEL equatorial domain-like"/>
    <property type="match status" value="1"/>
</dbReference>
<dbReference type="SUPFAM" id="SSF54849">
    <property type="entry name" value="GroEL-intermediate domain like"/>
    <property type="match status" value="1"/>
</dbReference>
<dbReference type="PROSITE" id="PS00296">
    <property type="entry name" value="CHAPERONINS_CPN60"/>
    <property type="match status" value="1"/>
</dbReference>
<reference key="1">
    <citation type="journal article" date="2009" name="Proc. Natl. Acad. Sci. U.S.A.">
        <title>The genomic basis of trophic strategy in marine bacteria.</title>
        <authorList>
            <person name="Lauro F.M."/>
            <person name="McDougald D."/>
            <person name="Thomas T."/>
            <person name="Williams T.J."/>
            <person name="Egan S."/>
            <person name="Rice S."/>
            <person name="DeMaere M.Z."/>
            <person name="Ting L."/>
            <person name="Ertan H."/>
            <person name="Johnson J."/>
            <person name="Ferriera S."/>
            <person name="Lapidus A."/>
            <person name="Anderson I."/>
            <person name="Kyrpides N."/>
            <person name="Munk A.C."/>
            <person name="Detter C."/>
            <person name="Han C.S."/>
            <person name="Brown M.V."/>
            <person name="Robb F.T."/>
            <person name="Kjelleberg S."/>
            <person name="Cavicchioli R."/>
        </authorList>
    </citation>
    <scope>NUCLEOTIDE SEQUENCE [LARGE SCALE GENOMIC DNA]</scope>
    <source>
        <strain>DSM 13593 / LMG 18877 / RB2256</strain>
    </source>
</reference>
<sequence>MAAKEVKFASDARDRMLRGVDTLANAVKVTLGPKGRNVVIEKSFGAPRITKDGVTVAKEIELADKFENMGAQMLREVASKQNDKAGDGTTTATVLAQAIVREGSKAVAAGMNPMDVKRGIDLAVKAVVKDLETHAKKVSANSEIAQVATISANGDEEVGRILAEAMDKVGNEGVITVEEAKSLATELETVEGMQFDRGYLSPYFITNAEKLKVELDDPYILIHEKKLSNLQAMLPLLEAVVQSGKPLLIIAEDVEGEALATLVVNRLRGGLKVAAVKAPGFGDRRKAMLEDIAILTGGNVVSEDLGIKLENVTVNMLGRAKKVVIDKDNTTIVDGVGARTDIDARIAQIRQQIDTTTSDYDREKLQERLAKLAGGVAVIRVGGATEVEVKERKDRVDDALHATRAAVEEGILPGGGIALLRALKALDGLKAANDDQQSGIDIVRRALRAPARQIADNAGEDGAWIVGKLLESSDYNWGFNAATGEYEDLVKAGVIDPAKVVRTALQDAASVAALLITTEALVAELPKEEKAAPMPAMDF</sequence>
<gene>
    <name evidence="1" type="primary">groEL2</name>
    <name evidence="1" type="synonym">groL2</name>
    <name type="ordered locus">Sala_2079</name>
</gene>